<name>RLMH_ECOK1</name>
<keyword id="KW-0963">Cytoplasm</keyword>
<keyword id="KW-0489">Methyltransferase</keyword>
<keyword id="KW-1185">Reference proteome</keyword>
<keyword id="KW-0698">rRNA processing</keyword>
<keyword id="KW-0949">S-adenosyl-L-methionine</keyword>
<keyword id="KW-0808">Transferase</keyword>
<proteinExistence type="inferred from homology"/>
<accession>A1A8R1</accession>
<feature type="chain" id="PRO_1000061781" description="Ribosomal RNA large subunit methyltransferase H">
    <location>
        <begin position="1"/>
        <end position="155"/>
    </location>
</feature>
<feature type="binding site" evidence="1">
    <location>
        <position position="72"/>
    </location>
    <ligand>
        <name>S-adenosyl-L-methionine</name>
        <dbReference type="ChEBI" id="CHEBI:59789"/>
    </ligand>
</feature>
<feature type="binding site" evidence="1">
    <location>
        <position position="103"/>
    </location>
    <ligand>
        <name>S-adenosyl-L-methionine</name>
        <dbReference type="ChEBI" id="CHEBI:59789"/>
    </ligand>
</feature>
<feature type="binding site" evidence="1">
    <location>
        <begin position="122"/>
        <end position="127"/>
    </location>
    <ligand>
        <name>S-adenosyl-L-methionine</name>
        <dbReference type="ChEBI" id="CHEBI:59789"/>
    </ligand>
</feature>
<gene>
    <name evidence="1" type="primary">rlmH</name>
    <name type="ordered locus">Ecok1_05570</name>
    <name type="ORF">APECO1_1419</name>
</gene>
<comment type="function">
    <text evidence="1">Specifically methylates the pseudouridine at position 1915 (m3Psi1915) in 23S rRNA.</text>
</comment>
<comment type="catalytic activity">
    <reaction evidence="1">
        <text>pseudouridine(1915) in 23S rRNA + S-adenosyl-L-methionine = N(3)-methylpseudouridine(1915) in 23S rRNA + S-adenosyl-L-homocysteine + H(+)</text>
        <dbReference type="Rhea" id="RHEA:42752"/>
        <dbReference type="Rhea" id="RHEA-COMP:10221"/>
        <dbReference type="Rhea" id="RHEA-COMP:10222"/>
        <dbReference type="ChEBI" id="CHEBI:15378"/>
        <dbReference type="ChEBI" id="CHEBI:57856"/>
        <dbReference type="ChEBI" id="CHEBI:59789"/>
        <dbReference type="ChEBI" id="CHEBI:65314"/>
        <dbReference type="ChEBI" id="CHEBI:74486"/>
        <dbReference type="EC" id="2.1.1.177"/>
    </reaction>
</comment>
<comment type="subunit">
    <text evidence="1">Homodimer.</text>
</comment>
<comment type="subcellular location">
    <subcellularLocation>
        <location evidence="1">Cytoplasm</location>
    </subcellularLocation>
</comment>
<comment type="similarity">
    <text evidence="1">Belongs to the RNA methyltransferase RlmH family.</text>
</comment>
<evidence type="ECO:0000255" key="1">
    <source>
        <dbReference type="HAMAP-Rule" id="MF_00658"/>
    </source>
</evidence>
<reference key="1">
    <citation type="journal article" date="2007" name="J. Bacteriol.">
        <title>The genome sequence of avian pathogenic Escherichia coli strain O1:K1:H7 shares strong similarities with human extraintestinal pathogenic E. coli genomes.</title>
        <authorList>
            <person name="Johnson T.J."/>
            <person name="Kariyawasam S."/>
            <person name="Wannemuehler Y."/>
            <person name="Mangiamele P."/>
            <person name="Johnson S.J."/>
            <person name="Doetkott C."/>
            <person name="Skyberg J.A."/>
            <person name="Lynne A.M."/>
            <person name="Johnson J.R."/>
            <person name="Nolan L.K."/>
        </authorList>
    </citation>
    <scope>NUCLEOTIDE SEQUENCE [LARGE SCALE GENOMIC DNA]</scope>
</reference>
<sequence length="155" mass="17341">MKLQLVAVGTKMPDWVQTGFTEYLRRFPKDMPFELIEIPAGKRGKNADIKRILDKEGEQMLAAAGKNRIVTLDIPGKPWDTPQLAAELERWKLDGRDVSLLIGGPEGLSPACKAAAEQSWSLSALTLPHPLVRVLVAESLYRAWSITTNHPYHRE</sequence>
<protein>
    <recommendedName>
        <fullName evidence="1">Ribosomal RNA large subunit methyltransferase H</fullName>
        <ecNumber evidence="1">2.1.1.177</ecNumber>
    </recommendedName>
    <alternativeName>
        <fullName evidence="1">23S rRNA (pseudouridine1915-N3)-methyltransferase</fullName>
    </alternativeName>
    <alternativeName>
        <fullName evidence="1">23S rRNA m3Psi1915 methyltransferase</fullName>
    </alternativeName>
    <alternativeName>
        <fullName evidence="1">rRNA (pseudouridine-N3-)-methyltransferase RlmH</fullName>
    </alternativeName>
</protein>
<organism>
    <name type="scientific">Escherichia coli O1:K1 / APEC</name>
    <dbReference type="NCBI Taxonomy" id="405955"/>
    <lineage>
        <taxon>Bacteria</taxon>
        <taxon>Pseudomonadati</taxon>
        <taxon>Pseudomonadota</taxon>
        <taxon>Gammaproteobacteria</taxon>
        <taxon>Enterobacterales</taxon>
        <taxon>Enterobacteriaceae</taxon>
        <taxon>Escherichia</taxon>
    </lineage>
</organism>
<dbReference type="EC" id="2.1.1.177" evidence="1"/>
<dbReference type="EMBL" id="CP000468">
    <property type="protein sequence ID" value="ABJ00051.1"/>
    <property type="molecule type" value="Genomic_DNA"/>
</dbReference>
<dbReference type="RefSeq" id="WP_000776104.1">
    <property type="nucleotide sequence ID" value="NZ_CADILS010000006.1"/>
</dbReference>
<dbReference type="BMRB" id="A1A8R1"/>
<dbReference type="SMR" id="A1A8R1"/>
<dbReference type="GeneID" id="93776846"/>
<dbReference type="KEGG" id="ecv:APECO1_1419"/>
<dbReference type="HOGENOM" id="CLU_100552_1_0_6"/>
<dbReference type="Proteomes" id="UP000008216">
    <property type="component" value="Chromosome"/>
</dbReference>
<dbReference type="GO" id="GO:0005737">
    <property type="term" value="C:cytoplasm"/>
    <property type="evidence" value="ECO:0007669"/>
    <property type="project" value="UniProtKB-SubCell"/>
</dbReference>
<dbReference type="GO" id="GO:0070038">
    <property type="term" value="F:rRNA (pseudouridine-N3-)-methyltransferase activity"/>
    <property type="evidence" value="ECO:0007669"/>
    <property type="project" value="UniProtKB-UniRule"/>
</dbReference>
<dbReference type="CDD" id="cd18081">
    <property type="entry name" value="RlmH-like"/>
    <property type="match status" value="1"/>
</dbReference>
<dbReference type="FunFam" id="3.40.1280.10:FF:000004">
    <property type="entry name" value="Ribosomal RNA large subunit methyltransferase H"/>
    <property type="match status" value="1"/>
</dbReference>
<dbReference type="Gene3D" id="3.40.1280.10">
    <property type="match status" value="1"/>
</dbReference>
<dbReference type="HAMAP" id="MF_00658">
    <property type="entry name" value="23SrRNA_methyltr_H"/>
    <property type="match status" value="1"/>
</dbReference>
<dbReference type="InterPro" id="IPR029028">
    <property type="entry name" value="Alpha/beta_knot_MTases"/>
</dbReference>
<dbReference type="InterPro" id="IPR003742">
    <property type="entry name" value="RlmH-like"/>
</dbReference>
<dbReference type="InterPro" id="IPR029026">
    <property type="entry name" value="tRNA_m1G_MTases_N"/>
</dbReference>
<dbReference type="NCBIfam" id="NF000984">
    <property type="entry name" value="PRK00103.1-1"/>
    <property type="match status" value="1"/>
</dbReference>
<dbReference type="NCBIfam" id="NF000986">
    <property type="entry name" value="PRK00103.1-4"/>
    <property type="match status" value="1"/>
</dbReference>
<dbReference type="NCBIfam" id="TIGR00246">
    <property type="entry name" value="tRNA_RlmH_YbeA"/>
    <property type="match status" value="1"/>
</dbReference>
<dbReference type="PANTHER" id="PTHR33603">
    <property type="entry name" value="METHYLTRANSFERASE"/>
    <property type="match status" value="1"/>
</dbReference>
<dbReference type="PANTHER" id="PTHR33603:SF1">
    <property type="entry name" value="RIBOSOMAL RNA LARGE SUBUNIT METHYLTRANSFERASE H"/>
    <property type="match status" value="1"/>
</dbReference>
<dbReference type="Pfam" id="PF02590">
    <property type="entry name" value="SPOUT_MTase"/>
    <property type="match status" value="1"/>
</dbReference>
<dbReference type="PIRSF" id="PIRSF004505">
    <property type="entry name" value="MT_bac"/>
    <property type="match status" value="1"/>
</dbReference>
<dbReference type="SUPFAM" id="SSF75217">
    <property type="entry name" value="alpha/beta knot"/>
    <property type="match status" value="1"/>
</dbReference>